<comment type="function">
    <text>Secretogranin-1 is a neuroendocrine secretory granule protein, which may be the precursor for other biologically active peptides.</text>
</comment>
<comment type="subunit">
    <text evidence="4">Interacts with ITPR1 in the secretory granules.</text>
</comment>
<comment type="subcellular location">
    <subcellularLocation>
        <location>Secreted</location>
    </subcellularLocation>
    <text evidence="1">Neuroendocrine and endocrine secretory granules.</text>
</comment>
<comment type="tissue specificity">
    <text evidence="8">Expressed in the brain, adrenal medulla and anterior pituitary. In the brain, localized to the hippocampal formation, the endocrine hypothalamus, the olfactory system, and in anatomically distinct structures in the pons-medulla.</text>
</comment>
<comment type="developmental stage">
    <text evidence="8">First expressed in the brain around embryonic days 13-14, and peaks by postnatal day 20.</text>
</comment>
<comment type="PTM">
    <text>Extensively processed in glucagonoma tissue by limited proteolysis at conserved basic residues. Alternative processing are seen in different tissues. The proglucagon-converting enzymes present in transformed alpha-cells are likely candidates to be involved in tissue-specific processing.</text>
</comment>
<comment type="mass spectrometry">
    <molecule>CCB peptide long form</molecule>
    <text>Sulfated and phosphorylated CCB peptide long form.</text>
</comment>
<comment type="mass spectrometry">
    <molecule>CCB peptide long form</molecule>
    <text>Sulfated or phosphorylated CCB peptide long form.</text>
</comment>
<comment type="mass spectrometry">
    <molecule>CCB peptide long form</molecule>
    <text>CCB peptide long form without any modifications.</text>
</comment>
<comment type="mass spectrometry">
    <molecule>CCB peptide short form</molecule>
    <text>Sulfated and phosphorylated CCB peptide short form.</text>
</comment>
<comment type="mass spectrometry">
    <molecule>CCB peptide short form</molecule>
    <text>Sulfated or phosphorylated CCB peptide short form.</text>
</comment>
<comment type="mass spectrometry">
    <molecule>CCB peptide short form</molecule>
    <text>CCB peptide short form without any modifications.</text>
</comment>
<comment type="similarity">
    <text evidence="10">Belongs to the chromogranin/secretogranin protein family.</text>
</comment>
<organism>
    <name type="scientific">Rattus norvegicus</name>
    <name type="common">Rat</name>
    <dbReference type="NCBI Taxonomy" id="10116"/>
    <lineage>
        <taxon>Eukaryota</taxon>
        <taxon>Metazoa</taxon>
        <taxon>Chordata</taxon>
        <taxon>Craniata</taxon>
        <taxon>Vertebrata</taxon>
        <taxon>Euteleostomi</taxon>
        <taxon>Mammalia</taxon>
        <taxon>Eutheria</taxon>
        <taxon>Euarchontoglires</taxon>
        <taxon>Glires</taxon>
        <taxon>Rodentia</taxon>
        <taxon>Myomorpha</taxon>
        <taxon>Muroidea</taxon>
        <taxon>Muridae</taxon>
        <taxon>Murinae</taxon>
        <taxon>Rattus</taxon>
    </lineage>
</organism>
<keyword id="KW-0027">Amidation</keyword>
<keyword id="KW-0165">Cleavage on pair of basic residues</keyword>
<keyword id="KW-0903">Direct protein sequencing</keyword>
<keyword id="KW-1015">Disulfide bond</keyword>
<keyword id="KW-0325">Glycoprotein</keyword>
<keyword id="KW-0597">Phosphoprotein</keyword>
<keyword id="KW-0654">Proteoglycan</keyword>
<keyword id="KW-1185">Reference proteome</keyword>
<keyword id="KW-0964">Secreted</keyword>
<keyword id="KW-0732">Signal</keyword>
<keyword id="KW-0765">Sulfation</keyword>
<sequence>MQRAMLLGLLGAAALAAVISAPVDNRDHNEEMVTRCIIEVLSNALSKSSAPTITPECRQVLRKSGKEVKGEEKGENENSKFEVRLLRDPSDASVGRWASSREETGAPVEDSPGQAKVDNEEWTGGGGHSREAVDDQESLHPSNQQVSKEAKIRHSEERGGKEEEEEEGKIYPKGEHRGDAGEEKKHTEESGEKHNAFSNKRSEASAKKKEESVARAEAHFVELEKTHSREQSSQESGEETRRQEKPQELPDQDQSEEESEEGEEGEEGATSEVTKRRPRHHHWRSQSNKPSYEGRRPLSEERKHAAGESKDANVATANLGEKRGHHLAHYRASEEEPDYGEELRSYPGFQAPQGLQYQGRGSEEVRAPSPRSEESQEKEYKRNHPDSELESTANRHSEETEEERSYEGAKGRQHRGRGREPGAYPALDSRQEKRLLDEGHDPVHESPVDTAKRYPQSKWQEQEKNYLNYDEEGDQGRWWQQEEQLEPEESREEVSFPDRQYAPYPTTEKRKRLGALFNPYFDPLQWKNSDFEKKGNPDDSFLDDDGEDGNGVTMTEKNFFPEYNYDWWEKRPFSEDVNWGYEKRSFARAPHLDLKRQYDDGVAELDQLLHYRKKAAEFPDFYDSEEQMGPHQEAEDEKDRADQRVLTEEEKKELENLAAMDLELQKIAEKFSQRG</sequence>
<reference key="1">
    <citation type="journal article" date="1989" name="J. Mol. Neurosci.">
        <title>Nucleotide sequence and cellular distribution of rat chromogranin B (secretogranin I) mRNA in the neuroendocrine system.</title>
        <authorList>
            <person name="Forss-Petter S."/>
            <person name="Danielson P."/>
            <person name="Battenberg E."/>
            <person name="Bloom F."/>
            <person name="Sutcliffe J.G."/>
        </authorList>
    </citation>
    <scope>NUCLEOTIDE SEQUENCE [MRNA]</scope>
    <scope>TISSUE SPECIFICITY</scope>
    <scope>DEVELOPMENTAL STAGE</scope>
    <source>
        <strain>Sprague-Dawley</strain>
    </source>
</reference>
<reference key="2">
    <citation type="journal article" date="2004" name="Genome Res.">
        <title>The status, quality, and expansion of the NIH full-length cDNA project: the Mammalian Gene Collection (MGC).</title>
        <authorList>
            <consortium name="The MGC Project Team"/>
        </authorList>
    </citation>
    <scope>NUCLEOTIDE SEQUENCE [LARGE SCALE MRNA]</scope>
    <source>
        <tissue>Brain</tissue>
    </source>
</reference>
<reference key="3">
    <citation type="journal article" date="1991" name="Endocrinology">
        <title>Chromogranin-B, a putative precursor of eight novel rat glucagonoma peptides through processing at mono-, di-, or tribasic residues.</title>
        <authorList>
            <person name="Nielsen E."/>
            <person name="Welinder B.S."/>
            <person name="Madsen O.D."/>
        </authorList>
    </citation>
    <scope>PARTIAL PROTEIN SEQUENCE</scope>
    <source>
        <tissue>Glucagonoma</tissue>
    </source>
</reference>
<reference key="4">
    <citation type="journal article" date="1987" name="EMBO J.">
        <title>The primary structure of human secretogranin I (chromogranin B): comparison with chromogranin A reveals homologous terminal domains and a large intervening variable region.</title>
        <authorList>
            <person name="Benedum U.M."/>
            <person name="Lamouroux A."/>
            <person name="Konecki D.S."/>
            <person name="Hille A."/>
            <person name="Baeuerle P.A."/>
            <person name="Frank R."/>
            <person name="Lottspeich F."/>
            <person name="Mallet J."/>
            <person name="Huttner W.B."/>
        </authorList>
    </citation>
    <scope>PROTEIN SEQUENCE OF 21-34; 85-93; 332-339 AND 345-353</scope>
    <scope>SULFATION AT TYR-339</scope>
    <source>
        <tissue>Pheochromocytoma</tissue>
    </source>
</reference>
<reference key="5">
    <citation type="journal article" date="2008" name="J. Proteome Res.">
        <title>A sulfated, phosphorylated 7 kDa secreted peptide characterized by direct analysis of cell culture media.</title>
        <authorList>
            <person name="Taylor S.W."/>
            <person name="Sun C."/>
            <person name="Hsieh A."/>
            <person name="Andon N.L."/>
            <person name="Ghosh S.S."/>
        </authorList>
    </citation>
    <scope>AMIDATION AT ARG-674</scope>
    <scope>SULFATION AT TYR-622</scope>
    <scope>PHOSPHORYLATION AT SER-624</scope>
    <scope>SYNTHESIS OF 615-674</scope>
    <scope>MASS SPECTROMETRY</scope>
</reference>
<reference key="6">
    <citation type="journal article" date="2012" name="Nat. Commun.">
        <title>Quantitative maps of protein phosphorylation sites across 14 different rat organs and tissues.</title>
        <authorList>
            <person name="Lundby A."/>
            <person name="Secher A."/>
            <person name="Lage K."/>
            <person name="Nordsborg N.B."/>
            <person name="Dmytriyev A."/>
            <person name="Lundby C."/>
            <person name="Olsen J.V."/>
        </authorList>
    </citation>
    <scope>PHOSPHORYLATION [LARGE SCALE ANALYSIS] AT SER-93; SER-129; SER-147; SER-190; SER-255; SER-259; SER-333; SER-375; SER-490 AND SER-624</scope>
    <scope>IDENTIFICATION BY MASS SPECTROMETRY [LARGE SCALE ANALYSIS]</scope>
</reference>
<evidence type="ECO:0000250" key="1"/>
<evidence type="ECO:0000250" key="2">
    <source>
        <dbReference type="UniProtKB" id="P05060"/>
    </source>
</evidence>
<evidence type="ECO:0000250" key="3">
    <source>
        <dbReference type="UniProtKB" id="P16014"/>
    </source>
</evidence>
<evidence type="ECO:0000250" key="4">
    <source>
        <dbReference type="UniProtKB" id="P23389"/>
    </source>
</evidence>
<evidence type="ECO:0000255" key="5"/>
<evidence type="ECO:0000256" key="6">
    <source>
        <dbReference type="SAM" id="MobiDB-lite"/>
    </source>
</evidence>
<evidence type="ECO:0000269" key="7">
    <source>
    </source>
</evidence>
<evidence type="ECO:0000269" key="8">
    <source>
    </source>
</evidence>
<evidence type="ECO:0000269" key="9">
    <source>
    </source>
</evidence>
<evidence type="ECO:0000305" key="10"/>
<evidence type="ECO:0007744" key="11">
    <source>
    </source>
</evidence>
<protein>
    <recommendedName>
        <fullName>Secretogranin-1</fullName>
    </recommendedName>
    <alternativeName>
        <fullName>Chromogranin-B</fullName>
        <shortName>CgB</shortName>
    </alternativeName>
    <alternativeName>
        <fullName>Glucagonoma peptide</fullName>
    </alternativeName>
    <alternativeName>
        <fullName>Secretogranin-I</fullName>
        <shortName>SgI</shortName>
    </alternativeName>
    <component>
        <recommendedName>
            <fullName>PE-11</fullName>
        </recommendedName>
    </component>
    <component>
        <recommendedName>
            <fullName>CCB peptide short form</fullName>
        </recommendedName>
    </component>
    <component>
        <recommendedName>
            <fullName>CCB peptide long form</fullName>
        </recommendedName>
    </component>
</protein>
<dbReference type="EMBL" id="AF019974">
    <property type="protein sequence ID" value="AAB72089.1"/>
    <property type="molecule type" value="mRNA"/>
</dbReference>
<dbReference type="EMBL" id="BC128743">
    <property type="protein sequence ID" value="AAI28744.1"/>
    <property type="molecule type" value="mRNA"/>
</dbReference>
<dbReference type="PIR" id="D49164">
    <property type="entry name" value="D49164"/>
</dbReference>
<dbReference type="RefSeq" id="NP_036658.2">
    <property type="nucleotide sequence ID" value="NM_012526.2"/>
</dbReference>
<dbReference type="SMR" id="O35314"/>
<dbReference type="FunCoup" id="O35314">
    <property type="interactions" value="148"/>
</dbReference>
<dbReference type="IntAct" id="O35314">
    <property type="interactions" value="2"/>
</dbReference>
<dbReference type="MINT" id="O35314"/>
<dbReference type="STRING" id="10116.ENSRNOP00000028892"/>
<dbReference type="GlyGen" id="O35314">
    <property type="glycosylation" value="2 sites"/>
</dbReference>
<dbReference type="iPTMnet" id="O35314"/>
<dbReference type="PhosphoSitePlus" id="O35314"/>
<dbReference type="jPOST" id="O35314"/>
<dbReference type="PaxDb" id="10116-ENSRNOP00000028892"/>
<dbReference type="GeneID" id="24259"/>
<dbReference type="KEGG" id="rno:24259"/>
<dbReference type="UCSC" id="RGD:2339">
    <property type="organism name" value="rat"/>
</dbReference>
<dbReference type="AGR" id="RGD:2339"/>
<dbReference type="CTD" id="1114"/>
<dbReference type="RGD" id="2339">
    <property type="gene designation" value="Chgb"/>
</dbReference>
<dbReference type="VEuPathDB" id="HostDB:ENSRNOG00000021269"/>
<dbReference type="eggNOG" id="ENOG502QRBF">
    <property type="taxonomic scope" value="Eukaryota"/>
</dbReference>
<dbReference type="HOGENOM" id="CLU_026095_0_0_1"/>
<dbReference type="InParanoid" id="O35314"/>
<dbReference type="PhylomeDB" id="O35314"/>
<dbReference type="TreeFam" id="TF336596"/>
<dbReference type="Reactome" id="R-RNO-381426">
    <property type="pathway name" value="Regulation of Insulin-like Growth Factor (IGF) transport and uptake by Insulin-like Growth Factor Binding Proteins (IGFBPs)"/>
</dbReference>
<dbReference type="Reactome" id="R-RNO-8957275">
    <property type="pathway name" value="Post-translational protein phosphorylation"/>
</dbReference>
<dbReference type="PRO" id="PR:O35314"/>
<dbReference type="Proteomes" id="UP000002494">
    <property type="component" value="Chromosome 3"/>
</dbReference>
<dbReference type="Bgee" id="ENSRNOG00000021269">
    <property type="expression patterns" value="Expressed in cerebellum and 15 other cell types or tissues"/>
</dbReference>
<dbReference type="GO" id="GO:0005615">
    <property type="term" value="C:extracellular space"/>
    <property type="evidence" value="ECO:0000318"/>
    <property type="project" value="GO_Central"/>
</dbReference>
<dbReference type="GO" id="GO:0030141">
    <property type="term" value="C:secretory granule"/>
    <property type="evidence" value="ECO:0000314"/>
    <property type="project" value="RGD"/>
</dbReference>
<dbReference type="InterPro" id="IPR001819">
    <property type="entry name" value="Chromogranin_AB"/>
</dbReference>
<dbReference type="InterPro" id="IPR018054">
    <property type="entry name" value="Chromogranin_CS"/>
</dbReference>
<dbReference type="InterPro" id="IPR001990">
    <property type="entry name" value="Granin"/>
</dbReference>
<dbReference type="PANTHER" id="PTHR10583">
    <property type="entry name" value="CHROMOGRANIN"/>
    <property type="match status" value="1"/>
</dbReference>
<dbReference type="PANTHER" id="PTHR10583:SF4">
    <property type="entry name" value="SECRETOGRANIN-1"/>
    <property type="match status" value="1"/>
</dbReference>
<dbReference type="Pfam" id="PF01271">
    <property type="entry name" value="Granin"/>
    <property type="match status" value="1"/>
</dbReference>
<dbReference type="PRINTS" id="PR00659">
    <property type="entry name" value="CHROMOGRANIN"/>
</dbReference>
<dbReference type="PROSITE" id="PS00422">
    <property type="entry name" value="GRANINS_1"/>
    <property type="match status" value="1"/>
</dbReference>
<dbReference type="PROSITE" id="PS00423">
    <property type="entry name" value="GRANINS_2"/>
    <property type="match status" value="1"/>
</dbReference>
<gene>
    <name type="primary">Chgb</name>
</gene>
<proteinExistence type="evidence at protein level"/>
<feature type="signal peptide" evidence="9">
    <location>
        <begin position="1"/>
        <end position="20"/>
    </location>
</feature>
<feature type="chain" id="PRO_0000005446" description="Secretogranin-1">
    <location>
        <begin position="21"/>
        <end position="675"/>
    </location>
</feature>
<feature type="peptide" id="PRO_0000432733" description="PE-11" evidence="3">
    <location>
        <begin position="572"/>
        <end position="582"/>
    </location>
</feature>
<feature type="peptide" id="PRO_0000411990" description="CCB peptide long form">
    <location>
        <begin position="615"/>
        <end position="675"/>
    </location>
</feature>
<feature type="peptide" id="PRO_0000005447" description="CCB peptide short form">
    <location>
        <begin position="615"/>
        <end position="674"/>
    </location>
</feature>
<feature type="region of interest" description="Disordered" evidence="6">
    <location>
        <begin position="64"/>
        <end position="507"/>
    </location>
</feature>
<feature type="region of interest" description="Disordered" evidence="6">
    <location>
        <begin position="528"/>
        <end position="555"/>
    </location>
</feature>
<feature type="region of interest" description="Disordered" evidence="6">
    <location>
        <begin position="620"/>
        <end position="646"/>
    </location>
</feature>
<feature type="compositionally biased region" description="Basic and acidic residues" evidence="6">
    <location>
        <begin position="64"/>
        <end position="90"/>
    </location>
</feature>
<feature type="compositionally biased region" description="Basic and acidic residues" evidence="6">
    <location>
        <begin position="148"/>
        <end position="161"/>
    </location>
</feature>
<feature type="compositionally biased region" description="Basic and acidic residues" evidence="6">
    <location>
        <begin position="168"/>
        <end position="248"/>
    </location>
</feature>
<feature type="compositionally biased region" description="Acidic residues" evidence="6">
    <location>
        <begin position="250"/>
        <end position="269"/>
    </location>
</feature>
<feature type="compositionally biased region" description="Basic and acidic residues" evidence="6">
    <location>
        <begin position="292"/>
        <end position="311"/>
    </location>
</feature>
<feature type="compositionally biased region" description="Basic and acidic residues" evidence="6">
    <location>
        <begin position="361"/>
        <end position="410"/>
    </location>
</feature>
<feature type="compositionally biased region" description="Basic and acidic residues" evidence="6">
    <location>
        <begin position="429"/>
        <end position="452"/>
    </location>
</feature>
<feature type="compositionally biased region" description="Basic and acidic residues" evidence="6">
    <location>
        <begin position="637"/>
        <end position="646"/>
    </location>
</feature>
<feature type="modified residue" description="Phosphoserine" evidence="11">
    <location>
        <position position="93"/>
    </location>
</feature>
<feature type="modified residue" description="Phosphoserine" evidence="5">
    <location>
        <position position="99"/>
    </location>
</feature>
<feature type="modified residue" description="Phosphoserine" evidence="5">
    <location>
        <position position="100"/>
    </location>
</feature>
<feature type="modified residue" description="Phosphoserine" evidence="11">
    <location>
        <position position="129"/>
    </location>
</feature>
<feature type="modified residue" description="Phosphoserine" evidence="11">
    <location>
        <position position="147"/>
    </location>
</feature>
<feature type="modified residue" description="Phosphoserine" evidence="11">
    <location>
        <position position="190"/>
    </location>
</feature>
<feature type="modified residue" description="Phosphoserine" evidence="11">
    <location>
        <position position="255"/>
    </location>
</feature>
<feature type="modified residue" description="Phosphoserine" evidence="11">
    <location>
        <position position="259"/>
    </location>
</feature>
<feature type="modified residue" description="Phosphoserine" evidence="5">
    <location>
        <position position="291"/>
    </location>
</feature>
<feature type="modified residue" description="Phosphoserine" evidence="2">
    <location>
        <position position="309"/>
    </location>
</feature>
<feature type="modified residue" description="Phosphoserine" evidence="11">
    <location>
        <position position="333"/>
    </location>
</feature>
<feature type="modified residue" description="Sulfotyrosine" evidence="9">
    <location>
        <position position="339"/>
    </location>
</feature>
<feature type="modified residue" description="Phosphoserine" evidence="2">
    <location>
        <position position="362"/>
    </location>
</feature>
<feature type="modified residue" description="Phosphoserine" evidence="2">
    <location>
        <position position="372"/>
    </location>
</feature>
<feature type="modified residue" description="Phosphoserine" evidence="11">
    <location>
        <position position="375"/>
    </location>
</feature>
<feature type="modified residue" description="Phosphoserine" evidence="5">
    <location>
        <position position="397"/>
    </location>
</feature>
<feature type="modified residue" description="Sulfotyrosine" evidence="4">
    <location>
        <position position="469"/>
    </location>
</feature>
<feature type="modified residue" description="Phosphoserine" evidence="11">
    <location>
        <position position="490"/>
    </location>
</feature>
<feature type="modified residue" description="Phosphoserine" evidence="5">
    <location>
        <position position="529"/>
    </location>
</feature>
<feature type="modified residue" description="Phosphoserine" evidence="5">
    <location>
        <position position="540"/>
    </location>
</feature>
<feature type="modified residue" description="Sulfotyrosine" evidence="4">
    <location>
        <position position="563"/>
    </location>
</feature>
<feature type="modified residue" description="Sulfotyrosine; partial" evidence="7">
    <location>
        <position position="622"/>
    </location>
</feature>
<feature type="modified residue" description="Phosphoserine" evidence="7 11">
    <location>
        <position position="624"/>
    </location>
</feature>
<feature type="modified residue" description="Arginine amide; in CCB peptide short form" evidence="7">
    <location>
        <position position="674"/>
    </location>
</feature>
<feature type="glycosylation site" description="O-linked (Xyl...) (chondroitin sulfate) serine" evidence="2">
    <location>
        <position position="93"/>
    </location>
</feature>
<feature type="glycosylation site" description="O-linked (Xyl...) (chondroitin sulfate) serine" evidence="2">
    <location>
        <position position="236"/>
    </location>
</feature>
<feature type="disulfide bond" evidence="1">
    <location>
        <begin position="36"/>
        <end position="57"/>
    </location>
</feature>
<feature type="sequence conflict" description="In Ref. 1; AAB72089." evidence="10" ref="1">
    <original>Q</original>
    <variation>R</variation>
    <location>
        <position position="358"/>
    </location>
</feature>
<feature type="sequence conflict" description="In Ref. 1; AAB72089." evidence="10" ref="1">
    <original>EQEK</original>
    <variation>GQGE</variation>
    <location>
        <begin position="461"/>
        <end position="464"/>
    </location>
</feature>
<feature type="sequence conflict" description="In Ref. 1; AAB72089." evidence="10" ref="1">
    <original>R</original>
    <variation>K</variation>
    <location>
        <position position="588"/>
    </location>
</feature>
<accession>O35314</accession>
<accession>A1A5N9</accession>
<accession>Q9QVG8</accession>
<accession>Q9QVH1</accession>
<name>SCG1_RAT</name>